<sequence>MFFEILIGASTKAVKDFISHCYSRLKSIYYCFKRWLMEISGQFKAHDAFVNMCFGHMADIEDFEAELAEEFAEREDEVEEARSLLKLLVAQKSKTGVTEAWTDFFTKSRGGVYAPLSCEPTRQDLEVKSEKLEKLLEEQHQFEVRAAKKYIKEKGRGFINCWNDLRSRLRLVKDVKDEAKDNARAAAKIGAEMFAPVDVQDLYSFTEVKKVETGLMKEVVKERNGEEEKHLEPIMEEVRSIKDTAEARDAASTWITETIKLKNSTLNADELSLATIARYVENVGDKFKLDIASKTYLKQVASMSVPIPTNKDIKLKMVLQSPEARARRERMDVLDSVGFLEGLCTASGFESPFPILGLPEIAVTDGARLRKVSCNIRYLSQTHLGLVYKAPNASLHNALVAVERRVYTVGKGDKAIYPPRPEHDIFTDTMDYFQKSIIEEVGYCKTYPAQLLANSYSAGKRAMYHKAIASLRTIPYHQKDANVQAFLKKEKHWMTKDIAPRLICPRSKRYNIILGTRLKFNEKKIMHAIDSVFGSPTVLSGYDNFKQGRIIAKKWQKFACPVAIGVDASRFDQHVSEQALKWEHGIYNGVFGDSELALALEHQITNNIKMFVEDKMLRFKVRGHRMSGDINTSMGNKLIMCGMMHAYFKKLGVEAELCNNGDDCVIITDRANEKLFDGMYDHFLRYGFNMVTEKPVYELEQLEFCQSKPVSINGKYRMVRRPDSIGKDSTTLLSMLNQSDVKSYMSAVAQCGLVLNAGVPILESFYKCLYRSSGYKKVSEEFIKNVISYGTDERLQGRRTFQDTPITNHSRMSYWESFGVDPKIQQIVERYYDNLTVSAQLQSVKVTTPHLQSILLSIPENHSHNEY</sequence>
<evidence type="ECO:0000255" key="1">
    <source>
        <dbReference type="PROSITE-ProRule" id="PRU00539"/>
    </source>
</evidence>
<evidence type="ECO:0000305" key="2"/>
<protein>
    <recommendedName>
        <fullName>Putative RNA-directed RNA polymerase</fullName>
        <ecNumber>2.7.7.48</ecNumber>
    </recommendedName>
</protein>
<comment type="function">
    <text>Probable polymerase.</text>
</comment>
<comment type="catalytic activity">
    <reaction evidence="1">
        <text>RNA(n) + a ribonucleoside 5'-triphosphate = RNA(n+1) + diphosphate</text>
        <dbReference type="Rhea" id="RHEA:21248"/>
        <dbReference type="Rhea" id="RHEA-COMP:14527"/>
        <dbReference type="Rhea" id="RHEA-COMP:17342"/>
        <dbReference type="ChEBI" id="CHEBI:33019"/>
        <dbReference type="ChEBI" id="CHEBI:61557"/>
        <dbReference type="ChEBI" id="CHEBI:140395"/>
        <dbReference type="EC" id="2.7.7.48"/>
    </reaction>
</comment>
<comment type="alternative products">
    <event type="ribosomal frameshifting"/>
    <isoform>
        <id>P29044-1</id>
        <name>Putative RNA-directed RNA polymerase</name>
        <sequence type="displayed"/>
    </isoform>
    <isoform>
        <id>P29044-2</id>
        <name>39 kDa protein</name>
        <sequence type="described" ref="VSP_031894"/>
    </isoform>
</comment>
<comment type="miscellaneous">
    <molecule>Isoform Putative RNA-directed RNA polymerase</molecule>
    <text>Produced by -1 ribosomal frameshifting between codons 339 and 340.</text>
</comment>
<comment type="miscellaneous">
    <molecule>Isoform 39 kDa protein</molecule>
    <text evidence="2">Produced by conventional translation.</text>
</comment>
<comment type="similarity">
    <text evidence="2">Belongs to the luteoviruses RNA polymerase family.</text>
</comment>
<proteinExistence type="inferred from homology"/>
<name>RDRP_BYDVM</name>
<dbReference type="EC" id="2.7.7.48"/>
<dbReference type="EMBL" id="D11028">
    <property type="protein sequence ID" value="BAA01779.1"/>
    <property type="status" value="ALT_FRAME"/>
    <property type="molecule type" value="Genomic_RNA"/>
</dbReference>
<dbReference type="PIR" id="JQ1409">
    <property type="entry name" value="RRVQBM"/>
</dbReference>
<dbReference type="KEGG" id="vg:940440"/>
<dbReference type="Proteomes" id="UP000203063">
    <property type="component" value="Segment"/>
</dbReference>
<dbReference type="GO" id="GO:0000166">
    <property type="term" value="F:nucleotide binding"/>
    <property type="evidence" value="ECO:0007669"/>
    <property type="project" value="UniProtKB-KW"/>
</dbReference>
<dbReference type="GO" id="GO:0003723">
    <property type="term" value="F:RNA binding"/>
    <property type="evidence" value="ECO:0007669"/>
    <property type="project" value="InterPro"/>
</dbReference>
<dbReference type="GO" id="GO:0003968">
    <property type="term" value="F:RNA-directed RNA polymerase activity"/>
    <property type="evidence" value="ECO:0007669"/>
    <property type="project" value="UniProtKB-KW"/>
</dbReference>
<dbReference type="GO" id="GO:0039694">
    <property type="term" value="P:viral RNA genome replication"/>
    <property type="evidence" value="ECO:0007669"/>
    <property type="project" value="InterPro"/>
</dbReference>
<dbReference type="GO" id="GO:0075523">
    <property type="term" value="P:viral translational frameshifting"/>
    <property type="evidence" value="ECO:0007669"/>
    <property type="project" value="UniProtKB-KW"/>
</dbReference>
<dbReference type="CDD" id="cd23233">
    <property type="entry name" value="Luteovirus_RdRp"/>
    <property type="match status" value="1"/>
</dbReference>
<dbReference type="Gene3D" id="3.30.70.270">
    <property type="match status" value="1"/>
</dbReference>
<dbReference type="InterPro" id="IPR043502">
    <property type="entry name" value="DNA/RNA_pol_sf"/>
</dbReference>
<dbReference type="InterPro" id="IPR013674">
    <property type="entry name" value="Luteo_Rpol_P1-P2"/>
</dbReference>
<dbReference type="InterPro" id="IPR043128">
    <property type="entry name" value="Rev_trsase/Diguanyl_cyclase"/>
</dbReference>
<dbReference type="InterPro" id="IPR007094">
    <property type="entry name" value="RNA-dir_pol_PSvirus"/>
</dbReference>
<dbReference type="InterPro" id="IPR002166">
    <property type="entry name" value="RNA_pol_HCV"/>
</dbReference>
<dbReference type="Pfam" id="PF08467">
    <property type="entry name" value="Luteo_P1-P2"/>
    <property type="match status" value="1"/>
</dbReference>
<dbReference type="Pfam" id="PF00998">
    <property type="entry name" value="RdRP_3"/>
    <property type="match status" value="1"/>
</dbReference>
<dbReference type="SUPFAM" id="SSF56672">
    <property type="entry name" value="DNA/RNA polymerases"/>
    <property type="match status" value="1"/>
</dbReference>
<dbReference type="PROSITE" id="PS50507">
    <property type="entry name" value="RDRP_SSRNA_POS"/>
    <property type="match status" value="1"/>
</dbReference>
<gene>
    <name type="ORF">ORF1/ORF2</name>
</gene>
<organism>
    <name type="scientific">Barley yellow dwarf virus (isolate MAV)</name>
    <name type="common">BYDV</name>
    <dbReference type="NCBI Taxonomy" id="2169984"/>
    <lineage>
        <taxon>Viruses</taxon>
        <taxon>Riboviria</taxon>
        <taxon>Orthornavirae</taxon>
        <taxon>Kitrinoviricota</taxon>
        <taxon>Tolucaviricetes</taxon>
        <taxon>Tolivirales</taxon>
        <taxon>Tombusviridae</taxon>
        <taxon>Regressovirinae</taxon>
        <taxon>Luteovirus</taxon>
        <taxon>Luteovirus mavhordei</taxon>
    </lineage>
</organism>
<keyword id="KW-0547">Nucleotide-binding</keyword>
<keyword id="KW-0548">Nucleotidyltransferase</keyword>
<keyword id="KW-1185">Reference proteome</keyword>
<keyword id="KW-0688">Ribosomal frameshifting</keyword>
<keyword id="KW-0696">RNA-directed RNA polymerase</keyword>
<keyword id="KW-0808">Transferase</keyword>
<keyword id="KW-0693">Viral RNA replication</keyword>
<feature type="chain" id="PRO_0000039184" description="Putative RNA-directed RNA polymerase">
    <location>
        <begin position="1"/>
        <end position="867"/>
    </location>
</feature>
<feature type="domain" description="RdRp catalytic" evidence="1">
    <location>
        <begin position="561"/>
        <end position="676"/>
    </location>
</feature>
<feature type="splice variant" id="VSP_031894" description="In isoform 39 kDa protein." evidence="2">
    <location>
        <begin position="340"/>
        <end position="867"/>
    </location>
</feature>
<organismHost>
    <name type="scientific">Avena byzantina</name>
    <dbReference type="NCBI Taxonomy" id="146531"/>
</organismHost>
<organismHost>
    <name type="scientific">Avena sativa</name>
    <name type="common">Oat</name>
    <dbReference type="NCBI Taxonomy" id="4498"/>
</organismHost>
<organismHost>
    <name type="scientific">Hordeum vulgare</name>
    <name type="common">Barley</name>
    <dbReference type="NCBI Taxonomy" id="4513"/>
</organismHost>
<organismHost>
    <name type="scientific">Lolium multiflorum</name>
    <name type="common">Italian ryegrass</name>
    <name type="synonym">Lolium perenne subsp. multiflorum</name>
    <dbReference type="NCBI Taxonomy" id="4521"/>
</organismHost>
<organismHost>
    <name type="scientific">Lolium perenne</name>
    <name type="common">Perennial ryegrass</name>
    <dbReference type="NCBI Taxonomy" id="4522"/>
</organismHost>
<organismHost>
    <name type="scientific">Oryza sativa</name>
    <name type="common">Rice</name>
    <dbReference type="NCBI Taxonomy" id="4530"/>
</organismHost>
<organismHost>
    <name type="scientific">Secale cereale</name>
    <name type="common">Rye</name>
    <dbReference type="NCBI Taxonomy" id="4550"/>
</organismHost>
<organismHost>
    <name type="scientific">Triticum aestivum</name>
    <name type="common">Wheat</name>
    <dbReference type="NCBI Taxonomy" id="4565"/>
</organismHost>
<organismHost>
    <name type="scientific">Zea mays</name>
    <name type="common">Maize</name>
    <dbReference type="NCBI Taxonomy" id="4577"/>
</organismHost>
<accession>P29044</accession>
<reference key="1">
    <citation type="journal article" date="1992" name="J. Gen. Virol.">
        <title>Nucleotide sequence analysis of the genomes of the MAV-PS1 and P-PAV isolates of barley yellow dwarf virus.</title>
        <authorList>
            <person name="Ueng P.P."/>
            <person name="Vincent J.R."/>
            <person name="Kawata E.E."/>
            <person name="Lei C.H."/>
            <person name="Lister R.M."/>
            <person name="Larkins B.A."/>
        </authorList>
    </citation>
    <scope>NUCLEOTIDE SEQUENCE [GENOMIC RNA]</scope>
</reference>